<sequence>MAYMCTDSGNLMAIAQQLIKQKQQQQSQHQQQEEQEQEPNPWPNPSFGFTLPGSGFSDPFQVTNDPGFHFPHLEHHQNAAVASEEFDSDEWMESLINGGDASQTNPDFPIYGHDPFVSFPSRLSAPSYLNRVNKDDSASQQLPPPPASTAIWSPSPPSPQHPPPPPPQPDFDLNQPIFKAIHDYARKPETKPDTLIRIKESVSESGDPIQRVGYYFAEALSHKETESPSSSSSSSLEDFILSYKTLNDACPYSKFAHLTANQAILEATNQSNNIHIVDFGIFQGIQWSALLQALATRSSGKPTRIRISGIPAPSLGDSPGPSLIATGNRLRDFAAILDLNFEFYPVLTPIQLLNGSSFRVDPDEVLVVNFMLELYKLLDETATTVGTALRLARSLNPRIVTLGEYEVSLNRVEFANRVKNSLRFYSAVFESLEPNLDRDSKERLRVERVLFGRRIMDLVRSDDDNNKPGTRFGLMEEKEQWRVLMEKAGFEPVKPSNYAVSQAKLLLWNYNYSTLYSLVESEPGFISLAWNNVPLLTVSSWR</sequence>
<accession>Q9SCR0</accession>
<accession>Q9XE54</accession>
<feature type="chain" id="PRO_0000350851" description="Scarecrow-like protein 7">
    <location>
        <begin position="1"/>
        <end position="542"/>
    </location>
</feature>
<feature type="domain" description="GRAS" evidence="3">
    <location>
        <begin position="164"/>
        <end position="542"/>
    </location>
</feature>
<feature type="region of interest" description="Disordered" evidence="4">
    <location>
        <begin position="18"/>
        <end position="71"/>
    </location>
</feature>
<feature type="region of interest" description="Disordered" evidence="4">
    <location>
        <begin position="133"/>
        <end position="174"/>
    </location>
</feature>
<feature type="region of interest" description="Leucine repeat I (LRI)" evidence="3">
    <location>
        <begin position="171"/>
        <end position="224"/>
    </location>
</feature>
<feature type="region of interest" description="VHIID" evidence="3">
    <location>
        <begin position="243"/>
        <end position="309"/>
    </location>
</feature>
<feature type="region of interest" description="Leucine repeat II (LRII)" evidence="3">
    <location>
        <begin position="325"/>
        <end position="357"/>
    </location>
</feature>
<feature type="region of interest" description="PFYRE" evidence="3">
    <location>
        <begin position="366"/>
        <end position="457"/>
    </location>
</feature>
<feature type="region of interest" description="SAW" evidence="3">
    <location>
        <begin position="460"/>
        <end position="542"/>
    </location>
</feature>
<feature type="short sequence motif" description="VHIID" evidence="3">
    <location>
        <begin position="274"/>
        <end position="278"/>
    </location>
</feature>
<feature type="short sequence motif" description="LXXLL motif" evidence="3">
    <location>
        <begin position="374"/>
        <end position="378"/>
    </location>
</feature>
<feature type="compositionally biased region" description="Low complexity" evidence="4">
    <location>
        <begin position="18"/>
        <end position="30"/>
    </location>
</feature>
<feature type="compositionally biased region" description="Pro residues" evidence="4">
    <location>
        <begin position="154"/>
        <end position="169"/>
    </location>
</feature>
<gene>
    <name type="primary">SCL7</name>
    <name type="ordered locus">At3g50650</name>
    <name type="ORF">T3A5.30</name>
</gene>
<name>SCL7_ARATH</name>
<protein>
    <recommendedName>
        <fullName>Scarecrow-like protein 7</fullName>
        <shortName>AtSCL7</shortName>
    </recommendedName>
    <alternativeName>
        <fullName>GRAS family protein 19</fullName>
        <shortName>AtGRAS-19</shortName>
    </alternativeName>
</protein>
<keyword id="KW-0238">DNA-binding</keyword>
<keyword id="KW-0539">Nucleus</keyword>
<keyword id="KW-1185">Reference proteome</keyword>
<keyword id="KW-0346">Stress response</keyword>
<keyword id="KW-0804">Transcription</keyword>
<keyword id="KW-0805">Transcription regulation</keyword>
<comment type="function">
    <text evidence="1 2 8">Probable transcription factor involved in plant development (Probable). Involved in environmental abiotic stress resistance. May increase the expression of stress-responsive genes (By similarity). Binds DNA in vitro (By similarity).</text>
</comment>
<comment type="subunit">
    <text evidence="2">Homodimer.</text>
</comment>
<comment type="interaction">
    <interactant intactId="EBI-15193551">
        <id>Q9SCR0</id>
    </interactant>
    <interactant intactId="EBI-15194203">
        <id>C0SVS4</id>
        <label>PHL11</label>
    </interactant>
    <organismsDiffer>false</organismsDiffer>
    <experiments>3</experiments>
</comment>
<comment type="subcellular location">
    <subcellularLocation>
        <location evidence="5">Nucleus</location>
    </subcellularLocation>
</comment>
<comment type="tissue specificity">
    <text evidence="5">Expressed in leaves, sepals, filaments of stamen, and in the central cylinder of the elongation zone in root.</text>
</comment>
<comment type="domain">
    <text evidence="2">The GRAS domain is involved in DNA-binding.</text>
</comment>
<comment type="disruption phenotype">
    <text evidence="6">Reduced germination ratio by salt treatment. Mannitol, an osmotic agent, together with salt strongly inhibit the growth and the plants are generally unhealthier than wild-type with less green cotyledons. Dramatic reduction of about 75% in root length upon salt or general osmotic stress. Plants wither under drought stress and the leaves have quicker water loss rate.</text>
</comment>
<comment type="similarity">
    <text evidence="8">Belongs to the GRAS family.</text>
</comment>
<evidence type="ECO:0000250" key="1">
    <source>
        <dbReference type="UniProtKB" id="A0A024B7I0"/>
    </source>
</evidence>
<evidence type="ECO:0000250" key="2">
    <source>
        <dbReference type="UniProtKB" id="Q53K16"/>
    </source>
</evidence>
<evidence type="ECO:0000255" key="3">
    <source>
        <dbReference type="PROSITE-ProRule" id="PRU01191"/>
    </source>
</evidence>
<evidence type="ECO:0000256" key="4">
    <source>
        <dbReference type="SAM" id="MobiDB-lite"/>
    </source>
</evidence>
<evidence type="ECO:0000269" key="5">
    <source>
    </source>
</evidence>
<evidence type="ECO:0000269" key="6">
    <source>
    </source>
</evidence>
<evidence type="ECO:0000303" key="7">
    <source>
    </source>
</evidence>
<evidence type="ECO:0000305" key="8"/>
<reference key="1">
    <citation type="journal article" date="2000" name="Nature">
        <title>Sequence and analysis of chromosome 3 of the plant Arabidopsis thaliana.</title>
        <authorList>
            <person name="Salanoubat M."/>
            <person name="Lemcke K."/>
            <person name="Rieger M."/>
            <person name="Ansorge W."/>
            <person name="Unseld M."/>
            <person name="Fartmann B."/>
            <person name="Valle G."/>
            <person name="Bloecker H."/>
            <person name="Perez-Alonso M."/>
            <person name="Obermaier B."/>
            <person name="Delseny M."/>
            <person name="Boutry M."/>
            <person name="Grivell L.A."/>
            <person name="Mache R."/>
            <person name="Puigdomenech P."/>
            <person name="De Simone V."/>
            <person name="Choisne N."/>
            <person name="Artiguenave F."/>
            <person name="Robert C."/>
            <person name="Brottier P."/>
            <person name="Wincker P."/>
            <person name="Cattolico L."/>
            <person name="Weissenbach J."/>
            <person name="Saurin W."/>
            <person name="Quetier F."/>
            <person name="Schaefer M."/>
            <person name="Mueller-Auer S."/>
            <person name="Gabel C."/>
            <person name="Fuchs M."/>
            <person name="Benes V."/>
            <person name="Wurmbach E."/>
            <person name="Drzonek H."/>
            <person name="Erfle H."/>
            <person name="Jordan N."/>
            <person name="Bangert S."/>
            <person name="Wiedelmann R."/>
            <person name="Kranz H."/>
            <person name="Voss H."/>
            <person name="Holland R."/>
            <person name="Brandt P."/>
            <person name="Nyakatura G."/>
            <person name="Vezzi A."/>
            <person name="D'Angelo M."/>
            <person name="Pallavicini A."/>
            <person name="Toppo S."/>
            <person name="Simionati B."/>
            <person name="Conrad A."/>
            <person name="Hornischer K."/>
            <person name="Kauer G."/>
            <person name="Loehnert T.-H."/>
            <person name="Nordsiek G."/>
            <person name="Reichelt J."/>
            <person name="Scharfe M."/>
            <person name="Schoen O."/>
            <person name="Bargues M."/>
            <person name="Terol J."/>
            <person name="Climent J."/>
            <person name="Navarro P."/>
            <person name="Collado C."/>
            <person name="Perez-Perez A."/>
            <person name="Ottenwaelder B."/>
            <person name="Duchemin D."/>
            <person name="Cooke R."/>
            <person name="Laudie M."/>
            <person name="Berger-Llauro C."/>
            <person name="Purnelle B."/>
            <person name="Masuy D."/>
            <person name="de Haan M."/>
            <person name="Maarse A.C."/>
            <person name="Alcaraz J.-P."/>
            <person name="Cottet A."/>
            <person name="Casacuberta E."/>
            <person name="Monfort A."/>
            <person name="Argiriou A."/>
            <person name="Flores M."/>
            <person name="Liguori R."/>
            <person name="Vitale D."/>
            <person name="Mannhaupt G."/>
            <person name="Haase D."/>
            <person name="Schoof H."/>
            <person name="Rudd S."/>
            <person name="Zaccaria P."/>
            <person name="Mewes H.-W."/>
            <person name="Mayer K.F.X."/>
            <person name="Kaul S."/>
            <person name="Town C.D."/>
            <person name="Koo H.L."/>
            <person name="Tallon L.J."/>
            <person name="Jenkins J."/>
            <person name="Rooney T."/>
            <person name="Rizzo M."/>
            <person name="Walts A."/>
            <person name="Utterback T."/>
            <person name="Fujii C.Y."/>
            <person name="Shea T.P."/>
            <person name="Creasy T.H."/>
            <person name="Haas B."/>
            <person name="Maiti R."/>
            <person name="Wu D."/>
            <person name="Peterson J."/>
            <person name="Van Aken S."/>
            <person name="Pai G."/>
            <person name="Militscher J."/>
            <person name="Sellers P."/>
            <person name="Gill J.E."/>
            <person name="Feldblyum T.V."/>
            <person name="Preuss D."/>
            <person name="Lin X."/>
            <person name="Nierman W.C."/>
            <person name="Salzberg S.L."/>
            <person name="White O."/>
            <person name="Venter J.C."/>
            <person name="Fraser C.M."/>
            <person name="Kaneko T."/>
            <person name="Nakamura Y."/>
            <person name="Sato S."/>
            <person name="Kato T."/>
            <person name="Asamizu E."/>
            <person name="Sasamoto S."/>
            <person name="Kimura T."/>
            <person name="Idesawa K."/>
            <person name="Kawashima K."/>
            <person name="Kishida Y."/>
            <person name="Kiyokawa C."/>
            <person name="Kohara M."/>
            <person name="Matsumoto M."/>
            <person name="Matsuno A."/>
            <person name="Muraki A."/>
            <person name="Nakayama S."/>
            <person name="Nakazaki N."/>
            <person name="Shinpo S."/>
            <person name="Takeuchi C."/>
            <person name="Wada T."/>
            <person name="Watanabe A."/>
            <person name="Yamada M."/>
            <person name="Yasuda M."/>
            <person name="Tabata S."/>
        </authorList>
    </citation>
    <scope>NUCLEOTIDE SEQUENCE [LARGE SCALE GENOMIC DNA]</scope>
    <source>
        <strain>cv. Columbia</strain>
    </source>
</reference>
<reference key="2">
    <citation type="journal article" date="2017" name="Plant J.">
        <title>Araport11: a complete reannotation of the Arabidopsis thaliana reference genome.</title>
        <authorList>
            <person name="Cheng C.Y."/>
            <person name="Krishnakumar V."/>
            <person name="Chan A.P."/>
            <person name="Thibaud-Nissen F."/>
            <person name="Schobel S."/>
            <person name="Town C.D."/>
        </authorList>
    </citation>
    <scope>GENOME REANNOTATION</scope>
    <source>
        <strain>cv. Columbia</strain>
    </source>
</reference>
<reference key="3">
    <citation type="submission" date="2006-07" db="EMBL/GenBank/DDBJ databases">
        <title>Large-scale analysis of RIKEN Arabidopsis full-length (RAFL) cDNAs.</title>
        <authorList>
            <person name="Totoki Y."/>
            <person name="Seki M."/>
            <person name="Ishida J."/>
            <person name="Nakajima M."/>
            <person name="Enju A."/>
            <person name="Kamiya A."/>
            <person name="Narusaka M."/>
            <person name="Shin-i T."/>
            <person name="Nakagawa M."/>
            <person name="Sakamoto N."/>
            <person name="Oishi K."/>
            <person name="Kohara Y."/>
            <person name="Kobayashi M."/>
            <person name="Toyoda A."/>
            <person name="Sakaki Y."/>
            <person name="Sakurai T."/>
            <person name="Iida K."/>
            <person name="Akiyama K."/>
            <person name="Satou M."/>
            <person name="Toyoda T."/>
            <person name="Konagaya A."/>
            <person name="Carninci P."/>
            <person name="Kawai J."/>
            <person name="Hayashizaki Y."/>
            <person name="Shinozaki K."/>
        </authorList>
    </citation>
    <scope>NUCLEOTIDE SEQUENCE [LARGE SCALE MRNA]</scope>
    <source>
        <strain>cv. Columbia</strain>
    </source>
</reference>
<reference key="4">
    <citation type="journal article" date="1999" name="Plant J.">
        <title>The GRAS gene family in Arabidopsis: sequence characterization and basic expression analysis of the SCARECROW-LIKE genes.</title>
        <authorList>
            <person name="Pysh L.D."/>
            <person name="Wysocka-Diller J.W."/>
            <person name="Camilleri C."/>
            <person name="Bouchez D."/>
            <person name="Benfey P.N."/>
        </authorList>
    </citation>
    <scope>NUCLEOTIDE SEQUENCE [MRNA] OF 431-542</scope>
    <scope>FUNCTION</scope>
</reference>
<reference key="5">
    <citation type="journal article" date="2004" name="Plant Mol. Biol.">
        <title>Genome-wide analysis of the GRAS gene family in rice and Arabidopsis.</title>
        <authorList>
            <person name="Tian C."/>
            <person name="Wan P."/>
            <person name="Sun S."/>
            <person name="Li J."/>
            <person name="Chen M."/>
        </authorList>
    </citation>
    <scope>GENE FAMILY</scope>
</reference>
<reference key="6">
    <citation type="journal article" date="2008" name="Plant Mol. Biol.">
        <title>Large-scale analysis of the GRAS gene family in Arabidopsis thaliana.</title>
        <authorList>
            <person name="Lee M.-H."/>
            <person name="Kim B."/>
            <person name="Song S.-K."/>
            <person name="Heo J.-O."/>
            <person name="Yu N.-I."/>
            <person name="Lee S.A."/>
            <person name="Kim M."/>
            <person name="Kim D.G."/>
            <person name="Sohn S.O."/>
            <person name="Lim C.E."/>
            <person name="Chang K.S."/>
            <person name="Lee M.M."/>
            <person name="Lim J."/>
        </authorList>
    </citation>
    <scope>GENE FAMILY</scope>
    <scope>SUBCELLULAR LOCATION</scope>
    <scope>TISSUE SPECIFICITY</scope>
</reference>
<reference key="7">
    <citation type="journal article" date="2010" name="J. Exp. Bot.">
        <title>The salt- and drought-inducible poplar GRAS protein SCL7 confers salt and drought tolerance in Arabidopsis thaliana.</title>
        <authorList>
            <person name="Ma H.S."/>
            <person name="Liang D."/>
            <person name="Shuai P."/>
            <person name="Xia X.L."/>
            <person name="Yin W.L."/>
        </authorList>
    </citation>
    <scope>DISRUPTION PHENOTYPE</scope>
    <source>
        <strain evidence="7">cv. Columbia</strain>
    </source>
</reference>
<organism>
    <name type="scientific">Arabidopsis thaliana</name>
    <name type="common">Mouse-ear cress</name>
    <dbReference type="NCBI Taxonomy" id="3702"/>
    <lineage>
        <taxon>Eukaryota</taxon>
        <taxon>Viridiplantae</taxon>
        <taxon>Streptophyta</taxon>
        <taxon>Embryophyta</taxon>
        <taxon>Tracheophyta</taxon>
        <taxon>Spermatophyta</taxon>
        <taxon>Magnoliopsida</taxon>
        <taxon>eudicotyledons</taxon>
        <taxon>Gunneridae</taxon>
        <taxon>Pentapetalae</taxon>
        <taxon>rosids</taxon>
        <taxon>malvids</taxon>
        <taxon>Brassicales</taxon>
        <taxon>Brassicaceae</taxon>
        <taxon>Camelineae</taxon>
        <taxon>Arabidopsis</taxon>
    </lineage>
</organism>
<dbReference type="EMBL" id="AL132979">
    <property type="protein sequence ID" value="CAB62434.1"/>
    <property type="molecule type" value="Genomic_DNA"/>
</dbReference>
<dbReference type="EMBL" id="CP002686">
    <property type="protein sequence ID" value="AEE78689.1"/>
    <property type="molecule type" value="Genomic_DNA"/>
</dbReference>
<dbReference type="EMBL" id="AK229252">
    <property type="protein sequence ID" value="BAF01117.1"/>
    <property type="molecule type" value="mRNA"/>
</dbReference>
<dbReference type="EMBL" id="AF036304">
    <property type="protein sequence ID" value="AAD24407.1"/>
    <property type="molecule type" value="mRNA"/>
</dbReference>
<dbReference type="PIR" id="T46142">
    <property type="entry name" value="T46142"/>
</dbReference>
<dbReference type="PIR" id="T51238">
    <property type="entry name" value="T51238"/>
</dbReference>
<dbReference type="RefSeq" id="NP_190634.1">
    <property type="nucleotide sequence ID" value="NM_114925.4"/>
</dbReference>
<dbReference type="SMR" id="Q9SCR0"/>
<dbReference type="BioGRID" id="9546">
    <property type="interactions" value="18"/>
</dbReference>
<dbReference type="FunCoup" id="Q9SCR0">
    <property type="interactions" value="26"/>
</dbReference>
<dbReference type="IntAct" id="Q9SCR0">
    <property type="interactions" value="16"/>
</dbReference>
<dbReference type="STRING" id="3702.Q9SCR0"/>
<dbReference type="PaxDb" id="3702-AT3G50650.1"/>
<dbReference type="ProteomicsDB" id="232815"/>
<dbReference type="EnsemblPlants" id="AT3G50650.1">
    <property type="protein sequence ID" value="AT3G50650.1"/>
    <property type="gene ID" value="AT3G50650"/>
</dbReference>
<dbReference type="GeneID" id="824228"/>
<dbReference type="Gramene" id="AT3G50650.1">
    <property type="protein sequence ID" value="AT3G50650.1"/>
    <property type="gene ID" value="AT3G50650"/>
</dbReference>
<dbReference type="KEGG" id="ath:AT3G50650"/>
<dbReference type="Araport" id="AT3G50650"/>
<dbReference type="TAIR" id="AT3G50650"/>
<dbReference type="eggNOG" id="ENOG502QTXA">
    <property type="taxonomic scope" value="Eukaryota"/>
</dbReference>
<dbReference type="HOGENOM" id="CLU_011924_0_5_1"/>
<dbReference type="InParanoid" id="Q9SCR0"/>
<dbReference type="OMA" id="NESCFRI"/>
<dbReference type="OrthoDB" id="1890360at2759"/>
<dbReference type="PhylomeDB" id="Q9SCR0"/>
<dbReference type="PRO" id="PR:Q9SCR0"/>
<dbReference type="Proteomes" id="UP000006548">
    <property type="component" value="Chromosome 3"/>
</dbReference>
<dbReference type="ExpressionAtlas" id="Q9SCR0">
    <property type="expression patterns" value="baseline and differential"/>
</dbReference>
<dbReference type="GO" id="GO:0005634">
    <property type="term" value="C:nucleus"/>
    <property type="evidence" value="ECO:0007669"/>
    <property type="project" value="UniProtKB-SubCell"/>
</dbReference>
<dbReference type="GO" id="GO:0003700">
    <property type="term" value="F:DNA-binding transcription factor activity"/>
    <property type="evidence" value="ECO:0000250"/>
    <property type="project" value="TAIR"/>
</dbReference>
<dbReference type="GO" id="GO:0000976">
    <property type="term" value="F:transcription cis-regulatory region binding"/>
    <property type="evidence" value="ECO:0000353"/>
    <property type="project" value="TAIR"/>
</dbReference>
<dbReference type="GO" id="GO:0006355">
    <property type="term" value="P:regulation of DNA-templated transcription"/>
    <property type="evidence" value="ECO:0000304"/>
    <property type="project" value="TAIR"/>
</dbReference>
<dbReference type="InterPro" id="IPR005202">
    <property type="entry name" value="TF_GRAS"/>
</dbReference>
<dbReference type="PANTHER" id="PTHR31636">
    <property type="entry name" value="OSJNBA0084A10.13 PROTEIN-RELATED"/>
    <property type="match status" value="1"/>
</dbReference>
<dbReference type="Pfam" id="PF03514">
    <property type="entry name" value="GRAS"/>
    <property type="match status" value="1"/>
</dbReference>
<dbReference type="PROSITE" id="PS50985">
    <property type="entry name" value="GRAS"/>
    <property type="match status" value="1"/>
</dbReference>
<proteinExistence type="evidence at protein level"/>